<feature type="chain" id="PRO_0000202759" description="Biogenesis of lysosome-related organelles complex 1 subunit KXD1">
    <location>
        <begin position="1"/>
        <end position="218"/>
    </location>
</feature>
<feature type="region of interest" description="Disordered" evidence="2">
    <location>
        <begin position="1"/>
        <end position="65"/>
    </location>
</feature>
<feature type="coiled-coil region" evidence="1">
    <location>
        <begin position="142"/>
        <end position="192"/>
    </location>
</feature>
<feature type="short sequence motif" description="KxDL">
    <location>
        <begin position="175"/>
        <end position="179"/>
    </location>
</feature>
<feature type="compositionally biased region" description="Polar residues" evidence="2">
    <location>
        <begin position="17"/>
        <end position="30"/>
    </location>
</feature>
<feature type="compositionally biased region" description="Low complexity" evidence="2">
    <location>
        <begin position="39"/>
        <end position="65"/>
    </location>
</feature>
<evidence type="ECO:0000255" key="1"/>
<evidence type="ECO:0000256" key="2">
    <source>
        <dbReference type="SAM" id="MobiDB-lite"/>
    </source>
</evidence>
<evidence type="ECO:0000269" key="3">
    <source>
    </source>
</evidence>
<evidence type="ECO:0000269" key="4">
    <source>
    </source>
</evidence>
<evidence type="ECO:0000269" key="5">
    <source>
    </source>
</evidence>
<evidence type="ECO:0000305" key="6"/>
<keyword id="KW-0175">Coiled coil</keyword>
<keyword id="KW-0967">Endosome</keyword>
<keyword id="KW-1185">Reference proteome</keyword>
<keyword id="KW-0813">Transport</keyword>
<proteinExistence type="evidence at protein level"/>
<organism>
    <name type="scientific">Saccharomyces cerevisiae (strain ATCC 204508 / S288c)</name>
    <name type="common">Baker's yeast</name>
    <dbReference type="NCBI Taxonomy" id="559292"/>
    <lineage>
        <taxon>Eukaryota</taxon>
        <taxon>Fungi</taxon>
        <taxon>Dikarya</taxon>
        <taxon>Ascomycota</taxon>
        <taxon>Saccharomycotina</taxon>
        <taxon>Saccharomycetes</taxon>
        <taxon>Saccharomycetales</taxon>
        <taxon>Saccharomycetaceae</taxon>
        <taxon>Saccharomyces</taxon>
    </lineage>
</organism>
<protein>
    <recommendedName>
        <fullName>Biogenesis of lysosome-related organelles complex 1 subunit KXD1</fullName>
        <shortName>BLOC-1 subunit KXD1</shortName>
    </recommendedName>
    <alternativeName>
        <fullName>KxDL homolog</fullName>
    </alternativeName>
</protein>
<accession>P53158</accession>
<accession>D6VU65</accession>
<sequence length="218" mass="24442">MVTGISEENDDEETFSAVHSSTPSINSQSYAIPITEEMSSSFHDSISTTSNSSGSFDSDGSNVSDVVEQNEMDNESNVDEDLFLDNDIPQSSNLLPTDAQDPGPIFDVSRYIFDSLKQSIDSADFSEALSLQTKTSAVINSKSLELKQYIDEMKSRLTQLQEKFENGEATSKKIKRDLETSRKNIDYLNAALRVDFPIEFNQAREKILERRLNEDHDC</sequence>
<dbReference type="EMBL" id="Z72601">
    <property type="protein sequence ID" value="CAA96784.1"/>
    <property type="molecule type" value="Genomic_DNA"/>
</dbReference>
<dbReference type="EMBL" id="AY558485">
    <property type="protein sequence ID" value="AAS56811.1"/>
    <property type="molecule type" value="Genomic_DNA"/>
</dbReference>
<dbReference type="EMBL" id="BK006941">
    <property type="protein sequence ID" value="DAA08026.1"/>
    <property type="molecule type" value="Genomic_DNA"/>
</dbReference>
<dbReference type="PIR" id="S64086">
    <property type="entry name" value="S64086"/>
</dbReference>
<dbReference type="RefSeq" id="NP_011436.1">
    <property type="nucleotide sequence ID" value="NM_001180944.1"/>
</dbReference>
<dbReference type="SMR" id="P53158"/>
<dbReference type="BioGRID" id="33171">
    <property type="interactions" value="98"/>
</dbReference>
<dbReference type="ComplexPortal" id="CPX-1153">
    <property type="entry name" value="BLOC-1 complex"/>
</dbReference>
<dbReference type="DIP" id="DIP-5247N"/>
<dbReference type="FunCoup" id="P53158">
    <property type="interactions" value="114"/>
</dbReference>
<dbReference type="IntAct" id="P53158">
    <property type="interactions" value="10"/>
</dbReference>
<dbReference type="MINT" id="P53158"/>
<dbReference type="STRING" id="4932.YGL079W"/>
<dbReference type="iPTMnet" id="P53158"/>
<dbReference type="PaxDb" id="4932-YGL079W"/>
<dbReference type="PeptideAtlas" id="P53158"/>
<dbReference type="EnsemblFungi" id="YGL079W_mRNA">
    <property type="protein sequence ID" value="YGL079W"/>
    <property type="gene ID" value="YGL079W"/>
</dbReference>
<dbReference type="GeneID" id="852801"/>
<dbReference type="KEGG" id="sce:YGL079W"/>
<dbReference type="AGR" id="SGD:S000003047"/>
<dbReference type="SGD" id="S000003047">
    <property type="gene designation" value="KXD1"/>
</dbReference>
<dbReference type="VEuPathDB" id="FungiDB:YGL079W"/>
<dbReference type="eggNOG" id="ENOG502S1H5">
    <property type="taxonomic scope" value="Eukaryota"/>
</dbReference>
<dbReference type="HOGENOM" id="CLU_099155_0_0_1"/>
<dbReference type="InParanoid" id="P53158"/>
<dbReference type="OMA" id="TPMFDTS"/>
<dbReference type="OrthoDB" id="4089816at2759"/>
<dbReference type="BioCyc" id="YEAST:G3O-30580-MONOMER"/>
<dbReference type="BioGRID-ORCS" id="852801">
    <property type="hits" value="7 hits in 10 CRISPR screens"/>
</dbReference>
<dbReference type="PRO" id="PR:P53158"/>
<dbReference type="Proteomes" id="UP000002311">
    <property type="component" value="Chromosome VII"/>
</dbReference>
<dbReference type="RNAct" id="P53158">
    <property type="molecule type" value="protein"/>
</dbReference>
<dbReference type="GO" id="GO:0031083">
    <property type="term" value="C:BLOC-1 complex"/>
    <property type="evidence" value="ECO:0000314"/>
    <property type="project" value="SGD"/>
</dbReference>
<dbReference type="GO" id="GO:0005768">
    <property type="term" value="C:endosome"/>
    <property type="evidence" value="ECO:0000314"/>
    <property type="project" value="ComplexPortal"/>
</dbReference>
<dbReference type="GO" id="GO:0007032">
    <property type="term" value="P:endosome organization"/>
    <property type="evidence" value="ECO:0000315"/>
    <property type="project" value="SGD"/>
</dbReference>
<dbReference type="GO" id="GO:0032880">
    <property type="term" value="P:regulation of protein localization"/>
    <property type="evidence" value="ECO:0000315"/>
    <property type="project" value="SGD"/>
</dbReference>
<dbReference type="InterPro" id="IPR051390">
    <property type="entry name" value="BLOC-1_subunit_KXD1"/>
</dbReference>
<dbReference type="InterPro" id="IPR019371">
    <property type="entry name" value="KxDL_dom"/>
</dbReference>
<dbReference type="PANTHER" id="PTHR37787">
    <property type="entry name" value="BIOGENESIS OF LYSOSOME-RELATED ORGANELLES COMPLEX 1 SUBUNIT KXD1"/>
    <property type="match status" value="1"/>
</dbReference>
<dbReference type="PANTHER" id="PTHR37787:SF1">
    <property type="entry name" value="BIOGENESIS OF LYSOSOME-RELATED ORGANELLES COMPLEX 1 SUBUNIT KXD1"/>
    <property type="match status" value="1"/>
</dbReference>
<dbReference type="Pfam" id="PF10241">
    <property type="entry name" value="KxDL"/>
    <property type="match status" value="1"/>
</dbReference>
<name>KXD1_YEAST</name>
<gene>
    <name type="primary">KXD1</name>
    <name type="ordered locus">YGL079W</name>
</gene>
<comment type="function">
    <text evidence="5">Component of the biogenesis of lysosome-related organelles complex-1 (BLOC-1) involved in endosomal cargo sorting.</text>
</comment>
<comment type="subunit">
    <text evidence="5">Component of the biogenesis of lysosome-related organelles complex-1 (BLOC-1) composed of at least BLI1, BLS1, CNL1, KXD1, SNN1 and VAB2.</text>
</comment>
<comment type="subcellular location">
    <subcellularLocation>
        <location evidence="3">Endosome</location>
    </subcellularLocation>
</comment>
<comment type="miscellaneous">
    <text evidence="4">Present with 1630 molecules/cell in log phase SD medium.</text>
</comment>
<comment type="similarity">
    <text evidence="6">Belongs to the KXD1 family.</text>
</comment>
<reference key="1">
    <citation type="journal article" date="1997" name="Yeast">
        <title>Sequence analysis of 203 kilobases from Saccharomyces cerevisiae chromosome VII.</title>
        <authorList>
            <person name="Rieger M."/>
            <person name="Brueckner M."/>
            <person name="Schaefer M."/>
            <person name="Mueller-Auer S."/>
        </authorList>
    </citation>
    <scope>NUCLEOTIDE SEQUENCE [GENOMIC DNA]</scope>
    <source>
        <strain>ATCC 204508 / S288c</strain>
    </source>
</reference>
<reference key="2">
    <citation type="journal article" date="1997" name="Nature">
        <title>The nucleotide sequence of Saccharomyces cerevisiae chromosome VII.</title>
        <authorList>
            <person name="Tettelin H."/>
            <person name="Agostoni-Carbone M.L."/>
            <person name="Albermann K."/>
            <person name="Albers M."/>
            <person name="Arroyo J."/>
            <person name="Backes U."/>
            <person name="Barreiros T."/>
            <person name="Bertani I."/>
            <person name="Bjourson A.J."/>
            <person name="Brueckner M."/>
            <person name="Bruschi C.V."/>
            <person name="Carignani G."/>
            <person name="Castagnoli L."/>
            <person name="Cerdan E."/>
            <person name="Clemente M.L."/>
            <person name="Coblenz A."/>
            <person name="Coglievina M."/>
            <person name="Coissac E."/>
            <person name="Defoor E."/>
            <person name="Del Bino S."/>
            <person name="Delius H."/>
            <person name="Delneri D."/>
            <person name="de Wergifosse P."/>
            <person name="Dujon B."/>
            <person name="Durand P."/>
            <person name="Entian K.-D."/>
            <person name="Eraso P."/>
            <person name="Escribano V."/>
            <person name="Fabiani L."/>
            <person name="Fartmann B."/>
            <person name="Feroli F."/>
            <person name="Feuermann M."/>
            <person name="Frontali L."/>
            <person name="Garcia-Gonzalez M."/>
            <person name="Garcia-Saez M.I."/>
            <person name="Goffeau A."/>
            <person name="Guerreiro P."/>
            <person name="Hani J."/>
            <person name="Hansen M."/>
            <person name="Hebling U."/>
            <person name="Hernandez K."/>
            <person name="Heumann K."/>
            <person name="Hilger F."/>
            <person name="Hofmann B."/>
            <person name="Indge K.J."/>
            <person name="James C.M."/>
            <person name="Klima R."/>
            <person name="Koetter P."/>
            <person name="Kramer B."/>
            <person name="Kramer W."/>
            <person name="Lauquin G."/>
            <person name="Leuther H."/>
            <person name="Louis E.J."/>
            <person name="Maillier E."/>
            <person name="Marconi A."/>
            <person name="Martegani E."/>
            <person name="Mazon M.J."/>
            <person name="Mazzoni C."/>
            <person name="McReynolds A.D.K."/>
            <person name="Melchioretto P."/>
            <person name="Mewes H.-W."/>
            <person name="Minenkova O."/>
            <person name="Mueller-Auer S."/>
            <person name="Nawrocki A."/>
            <person name="Netter P."/>
            <person name="Neu R."/>
            <person name="Nombela C."/>
            <person name="Oliver S.G."/>
            <person name="Panzeri L."/>
            <person name="Paoluzi S."/>
            <person name="Plevani P."/>
            <person name="Portetelle D."/>
            <person name="Portillo F."/>
            <person name="Potier S."/>
            <person name="Purnelle B."/>
            <person name="Rieger M."/>
            <person name="Riles L."/>
            <person name="Rinaldi T."/>
            <person name="Robben J."/>
            <person name="Rodrigues-Pousada C."/>
            <person name="Rodriguez-Belmonte E."/>
            <person name="Rodriguez-Torres A.M."/>
            <person name="Rose M."/>
            <person name="Ruzzi M."/>
            <person name="Saliola M."/>
            <person name="Sanchez-Perez M."/>
            <person name="Schaefer B."/>
            <person name="Schaefer M."/>
            <person name="Scharfe M."/>
            <person name="Schmidheini T."/>
            <person name="Schreer A."/>
            <person name="Skala J."/>
            <person name="Souciet J.-L."/>
            <person name="Steensma H.Y."/>
            <person name="Talla E."/>
            <person name="Thierry A."/>
            <person name="Vandenbol M."/>
            <person name="van der Aart Q.J.M."/>
            <person name="Van Dyck L."/>
            <person name="Vanoni M."/>
            <person name="Verhasselt P."/>
            <person name="Voet M."/>
            <person name="Volckaert G."/>
            <person name="Wambutt R."/>
            <person name="Watson M.D."/>
            <person name="Weber N."/>
            <person name="Wedler E."/>
            <person name="Wedler H."/>
            <person name="Wipfli P."/>
            <person name="Wolf K."/>
            <person name="Wright L.F."/>
            <person name="Zaccaria P."/>
            <person name="Zimmermann M."/>
            <person name="Zollner A."/>
            <person name="Kleine K."/>
        </authorList>
    </citation>
    <scope>NUCLEOTIDE SEQUENCE [LARGE SCALE GENOMIC DNA]</scope>
    <source>
        <strain>ATCC 204508 / S288c</strain>
    </source>
</reference>
<reference key="3">
    <citation type="journal article" date="2014" name="G3 (Bethesda)">
        <title>The reference genome sequence of Saccharomyces cerevisiae: Then and now.</title>
        <authorList>
            <person name="Engel S.R."/>
            <person name="Dietrich F.S."/>
            <person name="Fisk D.G."/>
            <person name="Binkley G."/>
            <person name="Balakrishnan R."/>
            <person name="Costanzo M.C."/>
            <person name="Dwight S.S."/>
            <person name="Hitz B.C."/>
            <person name="Karra K."/>
            <person name="Nash R.S."/>
            <person name="Weng S."/>
            <person name="Wong E.D."/>
            <person name="Lloyd P."/>
            <person name="Skrzypek M.S."/>
            <person name="Miyasato S.R."/>
            <person name="Simison M."/>
            <person name="Cherry J.M."/>
        </authorList>
    </citation>
    <scope>GENOME REANNOTATION</scope>
    <source>
        <strain>ATCC 204508 / S288c</strain>
    </source>
</reference>
<reference key="4">
    <citation type="journal article" date="2007" name="Genome Res.">
        <title>Approaching a complete repository of sequence-verified protein-encoding clones for Saccharomyces cerevisiae.</title>
        <authorList>
            <person name="Hu Y."/>
            <person name="Rolfs A."/>
            <person name="Bhullar B."/>
            <person name="Murthy T.V.S."/>
            <person name="Zhu C."/>
            <person name="Berger M.F."/>
            <person name="Camargo A.A."/>
            <person name="Kelley F."/>
            <person name="McCarron S."/>
            <person name="Jepson D."/>
            <person name="Richardson A."/>
            <person name="Raphael J."/>
            <person name="Moreira D."/>
            <person name="Taycher E."/>
            <person name="Zuo D."/>
            <person name="Mohr S."/>
            <person name="Kane M.F."/>
            <person name="Williamson J."/>
            <person name="Simpson A.J.G."/>
            <person name="Bulyk M.L."/>
            <person name="Harlow E."/>
            <person name="Marsischky G."/>
            <person name="Kolodner R.D."/>
            <person name="LaBaer J."/>
        </authorList>
    </citation>
    <scope>NUCLEOTIDE SEQUENCE [GENOMIC DNA]</scope>
    <source>
        <strain>ATCC 204508 / S288c</strain>
    </source>
</reference>
<reference key="5">
    <citation type="journal article" date="2003" name="Nature">
        <title>Global analysis of protein localization in budding yeast.</title>
        <authorList>
            <person name="Huh W.-K."/>
            <person name="Falvo J.V."/>
            <person name="Gerke L.C."/>
            <person name="Carroll A.S."/>
            <person name="Howson R.W."/>
            <person name="Weissman J.S."/>
            <person name="O'Shea E.K."/>
        </authorList>
    </citation>
    <scope>SUBCELLULAR LOCATION [LARGE SCALE ANALYSIS]</scope>
</reference>
<reference key="6">
    <citation type="journal article" date="2003" name="Nature">
        <title>Global analysis of protein expression in yeast.</title>
        <authorList>
            <person name="Ghaemmaghami S."/>
            <person name="Huh W.-K."/>
            <person name="Bower K."/>
            <person name="Howson R.W."/>
            <person name="Belle A."/>
            <person name="Dephoure N."/>
            <person name="O'Shea E.K."/>
            <person name="Weissman J.S."/>
        </authorList>
    </citation>
    <scope>LEVEL OF PROTEIN EXPRESSION [LARGE SCALE ANALYSIS]</scope>
</reference>
<reference key="7">
    <citation type="journal article" date="2011" name="Traffic">
        <title>Yeast homologues of three BLOC-1 subunits highlight KxDL proteins as conserved interactors of BLOC-1.</title>
        <authorList>
            <person name="Hayes M.J."/>
            <person name="Bryon K."/>
            <person name="Satkurunathan J."/>
            <person name="Levine T.P."/>
        </authorList>
    </citation>
    <scope>IDENTIFICATION IN THE BLOC-1 COMPLEX</scope>
    <scope>FUNCTION</scope>
</reference>